<comment type="function">
    <text evidence="1">Plays an essential role in the virus replication cycle by acting as a viroporin. Creates a pore in the host endoplasmic reticulum and as a consequence releases Ca(2+) in the cytoplasm of infected cell. In turn, high levels of cytoplasmic calcium trigger membrane trafficking and transport of viral ER-associated proteins to viroplasms, sites of viral genome replication and immature particle assembly.</text>
</comment>
<comment type="function">
    <text evidence="1">The secreted form acts as an enterotoxin that causes phospholipase C-dependent elevation of the intracellular calcium concentration in host intestinal mucosa cells. Increased concentration of intracellular calcium disrupts the cytoskeleton and the tight junctions, raising the paracellular permeability. Potentiates chloride ion secretion through a calcium ion-dependent signaling pathway, inducing age-dependent diarrhea. To perform this enterotoxigenic role in vivo, NSP4 is released from infected enterocytes in a soluble form capable of diffusing within the intestinal lumen and interacting with host plasma membrane receptors on neighboring epithelial cells such as integrins ITGA1/ITGB1 and ITGA2/ITGB1.</text>
</comment>
<comment type="subunit">
    <text evidence="1">Homotetramer. Interacts with the immature particle in the viroplasm. Interacts with host CAV1, early and late in infection. Interacts with host integrin ITGA1/ITGB1 heterodimer. Interacts with host integrin ITGA2/ITGB1 heterodimer. Interaction with microtubules blocks trafficking to the Golgi apparatus.</text>
</comment>
<comment type="subcellular location">
    <subcellularLocation>
        <location evidence="1">Host rough endoplasmic reticulum membrane</location>
        <topology evidence="1">Single-pass type III membrane protein</topology>
    </subcellularLocation>
    <subcellularLocation>
        <location evidence="1">Host membrane</location>
        <location evidence="1">Host caveola</location>
        <topology evidence="1">Single-pass type III membrane protein</topology>
    </subcellularLocation>
    <subcellularLocation>
        <location evidence="1">Secreted</location>
    </subcellularLocation>
    <text evidence="1">NSP4 also localizes in vesicular structures which contain autophagosomal markers and associate with viroplasms in virus-infected cells. Additionally, a soluble form of glycosylated NSP4 is secreted despite retention of its transmembrane domain.</text>
</comment>
<comment type="domain">
    <text evidence="1">Binds 1 calcium ion per tetramer.</text>
</comment>
<comment type="PTM">
    <text evidence="1">The N-glycosyl content is primarily Man(9)GlcNAc, with a small amount of Man(8)GlcNAc.</text>
</comment>
<comment type="similarity">
    <text evidence="1">Belongs to the rotavirus NSP4 family.</text>
</comment>
<keyword id="KW-1072">Activation of host autophagy by virus</keyword>
<keyword id="KW-0106">Calcium</keyword>
<keyword id="KW-0260">Enterotoxin</keyword>
<keyword id="KW-0325">Glycoprotein</keyword>
<keyword id="KW-1038">Host endoplasmic reticulum</keyword>
<keyword id="KW-1043">Host membrane</keyword>
<keyword id="KW-0945">Host-virus interaction</keyword>
<keyword id="KW-0407">Ion channel</keyword>
<keyword id="KW-0406">Ion transport</keyword>
<keyword id="KW-0472">Membrane</keyword>
<keyword id="KW-0479">Metal-binding</keyword>
<keyword id="KW-0964">Secreted</keyword>
<keyword id="KW-0735">Signal-anchor</keyword>
<keyword id="KW-0800">Toxin</keyword>
<keyword id="KW-0812">Transmembrane</keyword>
<keyword id="KW-1133">Transmembrane helix</keyword>
<keyword id="KW-0813">Transport</keyword>
<keyword id="KW-1182">Viral ion channel</keyword>
<keyword id="KW-0843">Virulence</keyword>
<accession>O56850</accession>
<sequence>MEKLTDLNYTLSVITLMNDTLHTIMEDPGMAYFPYIASVLTVLFTLHKASIPTMKIALRTSRCSYKVIKYCIVSIFNTLLKLAGYKEQITTKDEIEKQMDRVVKEMRRQLEMIDKLTTREIEQVELLKRIHDMLIIKPVDKIDMSQEFNQRQFKTLNEWAEGENPYEPKEVTASL</sequence>
<dbReference type="EMBL" id="D89873">
    <property type="protein sequence ID" value="BAA24413.1"/>
    <property type="molecule type" value="mRNA"/>
</dbReference>
<dbReference type="Proteomes" id="UP000001454">
    <property type="component" value="Genome"/>
</dbReference>
<dbReference type="GO" id="GO:0005576">
    <property type="term" value="C:extracellular region"/>
    <property type="evidence" value="ECO:0007669"/>
    <property type="project" value="UniProtKB-SubCell"/>
</dbReference>
<dbReference type="GO" id="GO:0044155">
    <property type="term" value="C:host caveola"/>
    <property type="evidence" value="ECO:0007669"/>
    <property type="project" value="UniProtKB-SubCell"/>
</dbReference>
<dbReference type="GO" id="GO:0044169">
    <property type="term" value="C:host cell rough endoplasmic reticulum membrane"/>
    <property type="evidence" value="ECO:0007669"/>
    <property type="project" value="UniProtKB-SubCell"/>
</dbReference>
<dbReference type="GO" id="GO:0016020">
    <property type="term" value="C:membrane"/>
    <property type="evidence" value="ECO:0007669"/>
    <property type="project" value="UniProtKB-UniRule"/>
</dbReference>
<dbReference type="GO" id="GO:0015267">
    <property type="term" value="F:channel activity"/>
    <property type="evidence" value="ECO:0007669"/>
    <property type="project" value="UniProtKB-KW"/>
</dbReference>
<dbReference type="GO" id="GO:0046872">
    <property type="term" value="F:metal ion binding"/>
    <property type="evidence" value="ECO:0007669"/>
    <property type="project" value="UniProtKB-UniRule"/>
</dbReference>
<dbReference type="GO" id="GO:0090729">
    <property type="term" value="F:toxin activity"/>
    <property type="evidence" value="ECO:0007669"/>
    <property type="project" value="UniProtKB-UniRule"/>
</dbReference>
<dbReference type="GO" id="GO:0034220">
    <property type="term" value="P:monoatomic ion transmembrane transport"/>
    <property type="evidence" value="ECO:0007669"/>
    <property type="project" value="UniProtKB-KW"/>
</dbReference>
<dbReference type="GO" id="GO:0039520">
    <property type="term" value="P:symbiont-mediated activation of host autophagy"/>
    <property type="evidence" value="ECO:0007669"/>
    <property type="project" value="UniProtKB-KW"/>
</dbReference>
<dbReference type="GO" id="GO:0016032">
    <property type="term" value="P:viral process"/>
    <property type="evidence" value="ECO:0007669"/>
    <property type="project" value="UniProtKB-UniRule"/>
</dbReference>
<dbReference type="Gene3D" id="1.20.5.430">
    <property type="match status" value="1"/>
</dbReference>
<dbReference type="HAMAP" id="MF_04091">
    <property type="entry name" value="ROTA_NSP4"/>
    <property type="match status" value="1"/>
</dbReference>
<dbReference type="InterPro" id="IPR002107">
    <property type="entry name" value="Rotavirus_NSP4"/>
</dbReference>
<dbReference type="Pfam" id="PF01452">
    <property type="entry name" value="Rota_NSP4"/>
    <property type="match status" value="1"/>
</dbReference>
<dbReference type="SUPFAM" id="SSF58030">
    <property type="entry name" value="Rotavirus nonstructural proteins"/>
    <property type="match status" value="1"/>
</dbReference>
<name>NSP4_ROTH3</name>
<protein>
    <recommendedName>
        <fullName evidence="1">Non-structural glycoprotein 4</fullName>
        <shortName evidence="1">NSP4</shortName>
    </recommendedName>
    <alternativeName>
        <fullName evidence="1">NCVP5</fullName>
    </alternativeName>
    <alternativeName>
        <fullName evidence="1">NS28</fullName>
    </alternativeName>
</protein>
<organismHost>
    <name type="scientific">Homo sapiens</name>
    <name type="common">Human</name>
    <dbReference type="NCBI Taxonomy" id="9606"/>
</organismHost>
<feature type="chain" id="PRO_0000369479" description="Non-structural glycoprotein 4">
    <location>
        <begin position="1"/>
        <end position="175"/>
    </location>
</feature>
<feature type="topological domain" description="Lumenal" evidence="1">
    <location>
        <begin position="1"/>
        <end position="28"/>
    </location>
</feature>
<feature type="transmembrane region" description="Helical; Signal-anchor for type III membrane protein" evidence="1">
    <location>
        <begin position="29"/>
        <end position="51"/>
    </location>
</feature>
<feature type="topological domain" description="Cytoplasmic" evidence="1">
    <location>
        <begin position="52"/>
        <end position="175"/>
    </location>
</feature>
<feature type="binding site" evidence="1">
    <location>
        <position position="120"/>
    </location>
    <ligand>
        <name>Ca(2+)</name>
        <dbReference type="ChEBI" id="CHEBI:29108"/>
    </ligand>
</feature>
<feature type="binding site" evidence="1">
    <location>
        <position position="123"/>
    </location>
    <ligand>
        <name>Ca(2+)</name>
        <dbReference type="ChEBI" id="CHEBI:29108"/>
    </ligand>
</feature>
<feature type="glycosylation site" description="N-linked (GlcNAc...) asparagine; by host" evidence="1">
    <location>
        <position position="8"/>
    </location>
</feature>
<feature type="glycosylation site" description="N-linked (GlcNAc...) asparagine; by host" evidence="1">
    <location>
        <position position="18"/>
    </location>
</feature>
<evidence type="ECO:0000255" key="1">
    <source>
        <dbReference type="HAMAP-Rule" id="MF_04091"/>
    </source>
</evidence>
<organism>
    <name type="scientific">Rotavirus A (strain RVA/Human/Japan/AU-1/1982/G3P3[9])</name>
    <name type="common">RV-A</name>
    <dbReference type="NCBI Taxonomy" id="39013"/>
    <lineage>
        <taxon>Viruses</taxon>
        <taxon>Riboviria</taxon>
        <taxon>Orthornavirae</taxon>
        <taxon>Duplornaviricota</taxon>
        <taxon>Resentoviricetes</taxon>
        <taxon>Reovirales</taxon>
        <taxon>Sedoreoviridae</taxon>
        <taxon>Rotavirus</taxon>
        <taxon>Rotavirus A</taxon>
    </lineage>
</organism>
<reference key="1">
    <citation type="journal article" date="1997" name="J. Gen. Virol.">
        <title>Three major alleles of rotavirus NSP4 proteins identified by sequence analysis.</title>
        <authorList>
            <person name="Horie Y."/>
            <person name="Masamune O."/>
            <person name="Nakagomi O."/>
        </authorList>
    </citation>
    <scope>NUCLEOTIDE SEQUENCE [MRNA]</scope>
</reference>
<proteinExistence type="evidence at transcript level"/>